<accession>A6VNV7</accession>
<proteinExistence type="inferred from homology"/>
<gene>
    <name evidence="1" type="primary">asnS</name>
    <name type="ordered locus">Asuc_1294</name>
</gene>
<sequence>MTKIASIADVLQGEIAVGEKVTVRGWVRTRRDSKAGLSFLTVYDGSCFNPIQAIINNDIVNYESEVLRLTAGCSVIVTGTVVESPAQGQAVELQTETVEVVGWVEDPDTYPMAAKRHSIEYLREVAHLRPRTNIIGAVARVRHCLAQAIHRFFHEQGFYWVATPLITASDTEGAGEMFRVSTLDLENLPRTQAGTVDFNQDFFGKEAFLTVSGQLNGETYACALSKIYTFGPTFRAENSNTTRHLAEFWMVEPEIAFATLADNAKLAEDMLKYVFNAVLTERRDDLEFFSKHVDKDVITRLEHFVNSPFAQIDYTDAIDVLVKSGKKFEFPVSWGIDLSSEHERYLAEEHFKSPVVVKNYPKGIKAFYMRLNDDGKTVAAMDVLAPGIGEIIGGSQREERLDVLDKRMVEMGLKPEDYWWYRDLRKYGTVPHSGFGLGFERLIVYVTGVQNIRDVIPFPRSPRNANF</sequence>
<comment type="catalytic activity">
    <reaction evidence="1">
        <text>tRNA(Asn) + L-asparagine + ATP = L-asparaginyl-tRNA(Asn) + AMP + diphosphate + H(+)</text>
        <dbReference type="Rhea" id="RHEA:11180"/>
        <dbReference type="Rhea" id="RHEA-COMP:9659"/>
        <dbReference type="Rhea" id="RHEA-COMP:9674"/>
        <dbReference type="ChEBI" id="CHEBI:15378"/>
        <dbReference type="ChEBI" id="CHEBI:30616"/>
        <dbReference type="ChEBI" id="CHEBI:33019"/>
        <dbReference type="ChEBI" id="CHEBI:58048"/>
        <dbReference type="ChEBI" id="CHEBI:78442"/>
        <dbReference type="ChEBI" id="CHEBI:78515"/>
        <dbReference type="ChEBI" id="CHEBI:456215"/>
        <dbReference type="EC" id="6.1.1.22"/>
    </reaction>
</comment>
<comment type="subunit">
    <text evidence="1">Homodimer.</text>
</comment>
<comment type="subcellular location">
    <subcellularLocation>
        <location evidence="1">Cytoplasm</location>
    </subcellularLocation>
</comment>
<comment type="similarity">
    <text evidence="1">Belongs to the class-II aminoacyl-tRNA synthetase family.</text>
</comment>
<keyword id="KW-0030">Aminoacyl-tRNA synthetase</keyword>
<keyword id="KW-0067">ATP-binding</keyword>
<keyword id="KW-0963">Cytoplasm</keyword>
<keyword id="KW-0436">Ligase</keyword>
<keyword id="KW-0547">Nucleotide-binding</keyword>
<keyword id="KW-0648">Protein biosynthesis</keyword>
<keyword id="KW-1185">Reference proteome</keyword>
<organism>
    <name type="scientific">Actinobacillus succinogenes (strain ATCC 55618 / DSM 22257 / CCUG 43843 / 130Z)</name>
    <dbReference type="NCBI Taxonomy" id="339671"/>
    <lineage>
        <taxon>Bacteria</taxon>
        <taxon>Pseudomonadati</taxon>
        <taxon>Pseudomonadota</taxon>
        <taxon>Gammaproteobacteria</taxon>
        <taxon>Pasteurellales</taxon>
        <taxon>Pasteurellaceae</taxon>
        <taxon>Actinobacillus</taxon>
    </lineage>
</organism>
<name>SYN_ACTSZ</name>
<reference key="1">
    <citation type="journal article" date="2010" name="BMC Genomics">
        <title>A genomic perspective on the potential of Actinobacillus succinogenes for industrial succinate production.</title>
        <authorList>
            <person name="McKinlay J.B."/>
            <person name="Laivenieks M."/>
            <person name="Schindler B.D."/>
            <person name="McKinlay A.A."/>
            <person name="Siddaramappa S."/>
            <person name="Challacombe J.F."/>
            <person name="Lowry S.R."/>
            <person name="Clum A."/>
            <person name="Lapidus A.L."/>
            <person name="Burkhart K.B."/>
            <person name="Harkins V."/>
            <person name="Vieille C."/>
        </authorList>
    </citation>
    <scope>NUCLEOTIDE SEQUENCE [LARGE SCALE GENOMIC DNA]</scope>
    <source>
        <strain>ATCC 55618 / DSM 22257 / CCUG 43843 / 130Z</strain>
    </source>
</reference>
<feature type="chain" id="PRO_1000072528" description="Asparagine--tRNA ligase">
    <location>
        <begin position="1"/>
        <end position="467"/>
    </location>
</feature>
<dbReference type="EC" id="6.1.1.22" evidence="1"/>
<dbReference type="EMBL" id="CP000746">
    <property type="protein sequence ID" value="ABR74654.1"/>
    <property type="molecule type" value="Genomic_DNA"/>
</dbReference>
<dbReference type="RefSeq" id="WP_012073031.1">
    <property type="nucleotide sequence ID" value="NC_009655.1"/>
</dbReference>
<dbReference type="SMR" id="A6VNV7"/>
<dbReference type="STRING" id="339671.Asuc_1294"/>
<dbReference type="KEGG" id="asu:Asuc_1294"/>
<dbReference type="eggNOG" id="COG0017">
    <property type="taxonomic scope" value="Bacteria"/>
</dbReference>
<dbReference type="HOGENOM" id="CLU_004553_2_0_6"/>
<dbReference type="OrthoDB" id="9762036at2"/>
<dbReference type="Proteomes" id="UP000001114">
    <property type="component" value="Chromosome"/>
</dbReference>
<dbReference type="GO" id="GO:0005737">
    <property type="term" value="C:cytoplasm"/>
    <property type="evidence" value="ECO:0007669"/>
    <property type="project" value="UniProtKB-SubCell"/>
</dbReference>
<dbReference type="GO" id="GO:0004816">
    <property type="term" value="F:asparagine-tRNA ligase activity"/>
    <property type="evidence" value="ECO:0007669"/>
    <property type="project" value="UniProtKB-UniRule"/>
</dbReference>
<dbReference type="GO" id="GO:0005524">
    <property type="term" value="F:ATP binding"/>
    <property type="evidence" value="ECO:0007669"/>
    <property type="project" value="UniProtKB-UniRule"/>
</dbReference>
<dbReference type="GO" id="GO:0003676">
    <property type="term" value="F:nucleic acid binding"/>
    <property type="evidence" value="ECO:0007669"/>
    <property type="project" value="InterPro"/>
</dbReference>
<dbReference type="GO" id="GO:0006421">
    <property type="term" value="P:asparaginyl-tRNA aminoacylation"/>
    <property type="evidence" value="ECO:0007669"/>
    <property type="project" value="UniProtKB-UniRule"/>
</dbReference>
<dbReference type="CDD" id="cd00776">
    <property type="entry name" value="AsxRS_core"/>
    <property type="match status" value="1"/>
</dbReference>
<dbReference type="CDD" id="cd04318">
    <property type="entry name" value="EcAsnRS_like_N"/>
    <property type="match status" value="1"/>
</dbReference>
<dbReference type="FunFam" id="3.30.930.10:FF:000016">
    <property type="entry name" value="Asparagine--tRNA ligase"/>
    <property type="match status" value="1"/>
</dbReference>
<dbReference type="Gene3D" id="3.30.930.10">
    <property type="entry name" value="Bira Bifunctional Protein, Domain 2"/>
    <property type="match status" value="1"/>
</dbReference>
<dbReference type="Gene3D" id="2.40.50.140">
    <property type="entry name" value="Nucleic acid-binding proteins"/>
    <property type="match status" value="1"/>
</dbReference>
<dbReference type="HAMAP" id="MF_00534">
    <property type="entry name" value="Asn_tRNA_synth"/>
    <property type="match status" value="1"/>
</dbReference>
<dbReference type="InterPro" id="IPR004364">
    <property type="entry name" value="Aa-tRNA-synt_II"/>
</dbReference>
<dbReference type="InterPro" id="IPR006195">
    <property type="entry name" value="aa-tRNA-synth_II"/>
</dbReference>
<dbReference type="InterPro" id="IPR045864">
    <property type="entry name" value="aa-tRNA-synth_II/BPL/LPL"/>
</dbReference>
<dbReference type="InterPro" id="IPR004522">
    <property type="entry name" value="Asn-tRNA-ligase"/>
</dbReference>
<dbReference type="InterPro" id="IPR002312">
    <property type="entry name" value="Asp/Asn-tRNA-synth_IIb"/>
</dbReference>
<dbReference type="InterPro" id="IPR012340">
    <property type="entry name" value="NA-bd_OB-fold"/>
</dbReference>
<dbReference type="InterPro" id="IPR004365">
    <property type="entry name" value="NA-bd_OB_tRNA"/>
</dbReference>
<dbReference type="NCBIfam" id="TIGR00457">
    <property type="entry name" value="asnS"/>
    <property type="match status" value="1"/>
</dbReference>
<dbReference type="NCBIfam" id="NF003037">
    <property type="entry name" value="PRK03932.1"/>
    <property type="match status" value="1"/>
</dbReference>
<dbReference type="PANTHER" id="PTHR22594:SF34">
    <property type="entry name" value="ASPARAGINE--TRNA LIGASE, MITOCHONDRIAL-RELATED"/>
    <property type="match status" value="1"/>
</dbReference>
<dbReference type="PANTHER" id="PTHR22594">
    <property type="entry name" value="ASPARTYL/LYSYL-TRNA SYNTHETASE"/>
    <property type="match status" value="1"/>
</dbReference>
<dbReference type="Pfam" id="PF00152">
    <property type="entry name" value="tRNA-synt_2"/>
    <property type="match status" value="1"/>
</dbReference>
<dbReference type="Pfam" id="PF01336">
    <property type="entry name" value="tRNA_anti-codon"/>
    <property type="match status" value="1"/>
</dbReference>
<dbReference type="PRINTS" id="PR01042">
    <property type="entry name" value="TRNASYNTHASP"/>
</dbReference>
<dbReference type="SUPFAM" id="SSF55681">
    <property type="entry name" value="Class II aaRS and biotin synthetases"/>
    <property type="match status" value="1"/>
</dbReference>
<dbReference type="SUPFAM" id="SSF50249">
    <property type="entry name" value="Nucleic acid-binding proteins"/>
    <property type="match status" value="1"/>
</dbReference>
<dbReference type="PROSITE" id="PS50862">
    <property type="entry name" value="AA_TRNA_LIGASE_II"/>
    <property type="match status" value="1"/>
</dbReference>
<protein>
    <recommendedName>
        <fullName evidence="1">Asparagine--tRNA ligase</fullName>
        <ecNumber evidence="1">6.1.1.22</ecNumber>
    </recommendedName>
    <alternativeName>
        <fullName evidence="1">Asparaginyl-tRNA synthetase</fullName>
        <shortName evidence="1">AsnRS</shortName>
    </alternativeName>
</protein>
<evidence type="ECO:0000255" key="1">
    <source>
        <dbReference type="HAMAP-Rule" id="MF_00534"/>
    </source>
</evidence>